<accession>A9GF63</accession>
<name>NDK_SORC5</name>
<sequence length="144" mass="15609">MALERTLSIIKPDAMEKNTAGAIVARLEQEGFTVKAMKRIHLTRAEAEGFYAEHRGRGFFDELVTFMSRSPILVMALEREDAVAKYREVIGATDPAKAAAGTIRKLYGANVGENAVHGSDKPATAAREIAYFFAGYEVAPSATA</sequence>
<protein>
    <recommendedName>
        <fullName evidence="1">Nucleoside diphosphate kinase</fullName>
        <shortName evidence="1">NDK</shortName>
        <shortName evidence="1">NDP kinase</shortName>
        <ecNumber evidence="1">2.7.4.6</ecNumber>
    </recommendedName>
    <alternativeName>
        <fullName evidence="1">Nucleoside-2-P kinase</fullName>
    </alternativeName>
</protein>
<gene>
    <name evidence="1" type="primary">ndk</name>
    <name type="ordered locus">sce2949</name>
</gene>
<feature type="chain" id="PRO_1000206222" description="Nucleoside diphosphate kinase">
    <location>
        <begin position="1"/>
        <end position="144"/>
    </location>
</feature>
<feature type="active site" description="Pros-phosphohistidine intermediate" evidence="1">
    <location>
        <position position="117"/>
    </location>
</feature>
<feature type="binding site" evidence="1">
    <location>
        <position position="11"/>
    </location>
    <ligand>
        <name>ATP</name>
        <dbReference type="ChEBI" id="CHEBI:30616"/>
    </ligand>
</feature>
<feature type="binding site" evidence="1">
    <location>
        <position position="59"/>
    </location>
    <ligand>
        <name>ATP</name>
        <dbReference type="ChEBI" id="CHEBI:30616"/>
    </ligand>
</feature>
<feature type="binding site" evidence="1">
    <location>
        <position position="87"/>
    </location>
    <ligand>
        <name>ATP</name>
        <dbReference type="ChEBI" id="CHEBI:30616"/>
    </ligand>
</feature>
<feature type="binding site" evidence="1">
    <location>
        <position position="93"/>
    </location>
    <ligand>
        <name>ATP</name>
        <dbReference type="ChEBI" id="CHEBI:30616"/>
    </ligand>
</feature>
<feature type="binding site" evidence="1">
    <location>
        <position position="104"/>
    </location>
    <ligand>
        <name>ATP</name>
        <dbReference type="ChEBI" id="CHEBI:30616"/>
    </ligand>
</feature>
<feature type="binding site" evidence="1">
    <location>
        <position position="114"/>
    </location>
    <ligand>
        <name>ATP</name>
        <dbReference type="ChEBI" id="CHEBI:30616"/>
    </ligand>
</feature>
<organism>
    <name type="scientific">Sorangium cellulosum (strain So ce56)</name>
    <name type="common">Polyangium cellulosum (strain So ce56)</name>
    <dbReference type="NCBI Taxonomy" id="448385"/>
    <lineage>
        <taxon>Bacteria</taxon>
        <taxon>Pseudomonadati</taxon>
        <taxon>Myxococcota</taxon>
        <taxon>Polyangia</taxon>
        <taxon>Polyangiales</taxon>
        <taxon>Polyangiaceae</taxon>
        <taxon>Sorangium</taxon>
    </lineage>
</organism>
<keyword id="KW-0067">ATP-binding</keyword>
<keyword id="KW-0963">Cytoplasm</keyword>
<keyword id="KW-0418">Kinase</keyword>
<keyword id="KW-0460">Magnesium</keyword>
<keyword id="KW-0479">Metal-binding</keyword>
<keyword id="KW-0546">Nucleotide metabolism</keyword>
<keyword id="KW-0547">Nucleotide-binding</keyword>
<keyword id="KW-0597">Phosphoprotein</keyword>
<keyword id="KW-1185">Reference proteome</keyword>
<keyword id="KW-0808">Transferase</keyword>
<evidence type="ECO:0000255" key="1">
    <source>
        <dbReference type="HAMAP-Rule" id="MF_00451"/>
    </source>
</evidence>
<comment type="function">
    <text evidence="1">Major role in the synthesis of nucleoside triphosphates other than ATP. The ATP gamma phosphate is transferred to the NDP beta phosphate via a ping-pong mechanism, using a phosphorylated active-site intermediate.</text>
</comment>
<comment type="catalytic activity">
    <reaction evidence="1">
        <text>a 2'-deoxyribonucleoside 5'-diphosphate + ATP = a 2'-deoxyribonucleoside 5'-triphosphate + ADP</text>
        <dbReference type="Rhea" id="RHEA:44640"/>
        <dbReference type="ChEBI" id="CHEBI:30616"/>
        <dbReference type="ChEBI" id="CHEBI:61560"/>
        <dbReference type="ChEBI" id="CHEBI:73316"/>
        <dbReference type="ChEBI" id="CHEBI:456216"/>
        <dbReference type="EC" id="2.7.4.6"/>
    </reaction>
</comment>
<comment type="catalytic activity">
    <reaction evidence="1">
        <text>a ribonucleoside 5'-diphosphate + ATP = a ribonucleoside 5'-triphosphate + ADP</text>
        <dbReference type="Rhea" id="RHEA:18113"/>
        <dbReference type="ChEBI" id="CHEBI:30616"/>
        <dbReference type="ChEBI" id="CHEBI:57930"/>
        <dbReference type="ChEBI" id="CHEBI:61557"/>
        <dbReference type="ChEBI" id="CHEBI:456216"/>
        <dbReference type="EC" id="2.7.4.6"/>
    </reaction>
</comment>
<comment type="cofactor">
    <cofactor evidence="1">
        <name>Mg(2+)</name>
        <dbReference type="ChEBI" id="CHEBI:18420"/>
    </cofactor>
</comment>
<comment type="subunit">
    <text evidence="1">Homotetramer.</text>
</comment>
<comment type="subcellular location">
    <subcellularLocation>
        <location evidence="1">Cytoplasm</location>
    </subcellularLocation>
</comment>
<comment type="similarity">
    <text evidence="1">Belongs to the NDK family.</text>
</comment>
<reference key="1">
    <citation type="journal article" date="2007" name="Nat. Biotechnol.">
        <title>Complete genome sequence of the myxobacterium Sorangium cellulosum.</title>
        <authorList>
            <person name="Schneiker S."/>
            <person name="Perlova O."/>
            <person name="Kaiser O."/>
            <person name="Gerth K."/>
            <person name="Alici A."/>
            <person name="Altmeyer M.O."/>
            <person name="Bartels D."/>
            <person name="Bekel T."/>
            <person name="Beyer S."/>
            <person name="Bode E."/>
            <person name="Bode H.B."/>
            <person name="Bolten C.J."/>
            <person name="Choudhuri J.V."/>
            <person name="Doss S."/>
            <person name="Elnakady Y.A."/>
            <person name="Frank B."/>
            <person name="Gaigalat L."/>
            <person name="Goesmann A."/>
            <person name="Groeger C."/>
            <person name="Gross F."/>
            <person name="Jelsbak L."/>
            <person name="Jelsbak L."/>
            <person name="Kalinowski J."/>
            <person name="Kegler C."/>
            <person name="Knauber T."/>
            <person name="Konietzny S."/>
            <person name="Kopp M."/>
            <person name="Krause L."/>
            <person name="Krug D."/>
            <person name="Linke B."/>
            <person name="Mahmud T."/>
            <person name="Martinez-Arias R."/>
            <person name="McHardy A.C."/>
            <person name="Merai M."/>
            <person name="Meyer F."/>
            <person name="Mormann S."/>
            <person name="Munoz-Dorado J."/>
            <person name="Perez J."/>
            <person name="Pradella S."/>
            <person name="Rachid S."/>
            <person name="Raddatz G."/>
            <person name="Rosenau F."/>
            <person name="Rueckert C."/>
            <person name="Sasse F."/>
            <person name="Scharfe M."/>
            <person name="Schuster S.C."/>
            <person name="Suen G."/>
            <person name="Treuner-Lange A."/>
            <person name="Velicer G.J."/>
            <person name="Vorholter F.-J."/>
            <person name="Weissman K.J."/>
            <person name="Welch R.D."/>
            <person name="Wenzel S.C."/>
            <person name="Whitworth D.E."/>
            <person name="Wilhelm S."/>
            <person name="Wittmann C."/>
            <person name="Bloecker H."/>
            <person name="Puehler A."/>
            <person name="Mueller R."/>
        </authorList>
    </citation>
    <scope>NUCLEOTIDE SEQUENCE [LARGE SCALE GENOMIC DNA]</scope>
    <source>
        <strain>So ce56</strain>
    </source>
</reference>
<proteinExistence type="inferred from homology"/>
<dbReference type="EC" id="2.7.4.6" evidence="1"/>
<dbReference type="EMBL" id="AM746676">
    <property type="protein sequence ID" value="CAN93108.1"/>
    <property type="molecule type" value="Genomic_DNA"/>
</dbReference>
<dbReference type="RefSeq" id="WP_012235580.1">
    <property type="nucleotide sequence ID" value="NC_010162.1"/>
</dbReference>
<dbReference type="SMR" id="A9GF63"/>
<dbReference type="STRING" id="448385.sce2949"/>
<dbReference type="KEGG" id="scl:sce2949"/>
<dbReference type="eggNOG" id="COG0105">
    <property type="taxonomic scope" value="Bacteria"/>
</dbReference>
<dbReference type="HOGENOM" id="CLU_060216_8_1_7"/>
<dbReference type="OrthoDB" id="9801161at2"/>
<dbReference type="BioCyc" id="SCEL448385:SCE_RS15150-MONOMER"/>
<dbReference type="Proteomes" id="UP000002139">
    <property type="component" value="Chromosome"/>
</dbReference>
<dbReference type="GO" id="GO:0005737">
    <property type="term" value="C:cytoplasm"/>
    <property type="evidence" value="ECO:0007669"/>
    <property type="project" value="UniProtKB-SubCell"/>
</dbReference>
<dbReference type="GO" id="GO:0005524">
    <property type="term" value="F:ATP binding"/>
    <property type="evidence" value="ECO:0007669"/>
    <property type="project" value="UniProtKB-UniRule"/>
</dbReference>
<dbReference type="GO" id="GO:0046872">
    <property type="term" value="F:metal ion binding"/>
    <property type="evidence" value="ECO:0007669"/>
    <property type="project" value="UniProtKB-KW"/>
</dbReference>
<dbReference type="GO" id="GO:0004550">
    <property type="term" value="F:nucleoside diphosphate kinase activity"/>
    <property type="evidence" value="ECO:0007669"/>
    <property type="project" value="UniProtKB-UniRule"/>
</dbReference>
<dbReference type="GO" id="GO:0006241">
    <property type="term" value="P:CTP biosynthetic process"/>
    <property type="evidence" value="ECO:0007669"/>
    <property type="project" value="UniProtKB-UniRule"/>
</dbReference>
<dbReference type="GO" id="GO:0006183">
    <property type="term" value="P:GTP biosynthetic process"/>
    <property type="evidence" value="ECO:0007669"/>
    <property type="project" value="UniProtKB-UniRule"/>
</dbReference>
<dbReference type="GO" id="GO:0006228">
    <property type="term" value="P:UTP biosynthetic process"/>
    <property type="evidence" value="ECO:0007669"/>
    <property type="project" value="UniProtKB-UniRule"/>
</dbReference>
<dbReference type="CDD" id="cd04413">
    <property type="entry name" value="NDPk_I"/>
    <property type="match status" value="1"/>
</dbReference>
<dbReference type="FunFam" id="3.30.70.141:FF:000017">
    <property type="entry name" value="Nucleoside diphosphate kinase"/>
    <property type="match status" value="1"/>
</dbReference>
<dbReference type="Gene3D" id="3.30.70.141">
    <property type="entry name" value="Nucleoside diphosphate kinase-like domain"/>
    <property type="match status" value="1"/>
</dbReference>
<dbReference type="HAMAP" id="MF_00451">
    <property type="entry name" value="NDP_kinase"/>
    <property type="match status" value="1"/>
</dbReference>
<dbReference type="InterPro" id="IPR034907">
    <property type="entry name" value="NDK-like_dom"/>
</dbReference>
<dbReference type="InterPro" id="IPR036850">
    <property type="entry name" value="NDK-like_dom_sf"/>
</dbReference>
<dbReference type="InterPro" id="IPR001564">
    <property type="entry name" value="Nucleoside_diP_kinase"/>
</dbReference>
<dbReference type="NCBIfam" id="NF001908">
    <property type="entry name" value="PRK00668.1"/>
    <property type="match status" value="1"/>
</dbReference>
<dbReference type="PANTHER" id="PTHR46161">
    <property type="entry name" value="NUCLEOSIDE DIPHOSPHATE KINASE"/>
    <property type="match status" value="1"/>
</dbReference>
<dbReference type="PANTHER" id="PTHR46161:SF3">
    <property type="entry name" value="NUCLEOSIDE DIPHOSPHATE KINASE DDB_G0292928-RELATED"/>
    <property type="match status" value="1"/>
</dbReference>
<dbReference type="Pfam" id="PF00334">
    <property type="entry name" value="NDK"/>
    <property type="match status" value="1"/>
</dbReference>
<dbReference type="PRINTS" id="PR01243">
    <property type="entry name" value="NUCDPKINASE"/>
</dbReference>
<dbReference type="SMART" id="SM00562">
    <property type="entry name" value="NDK"/>
    <property type="match status" value="1"/>
</dbReference>
<dbReference type="SUPFAM" id="SSF54919">
    <property type="entry name" value="Nucleoside diphosphate kinase, NDK"/>
    <property type="match status" value="1"/>
</dbReference>
<dbReference type="PROSITE" id="PS51374">
    <property type="entry name" value="NDPK_LIKE"/>
    <property type="match status" value="1"/>
</dbReference>